<keyword id="KW-1185">Reference proteome</keyword>
<keyword id="KW-0687">Ribonucleoprotein</keyword>
<keyword id="KW-0689">Ribosomal protein</keyword>
<keyword id="KW-0694">RNA-binding</keyword>
<keyword id="KW-0699">rRNA-binding</keyword>
<proteinExistence type="inferred from homology"/>
<protein>
    <recommendedName>
        <fullName evidence="1">Large ribosomal subunit protein uL6</fullName>
    </recommendedName>
    <alternativeName>
        <fullName evidence="2">50S ribosomal protein L6</fullName>
    </alternativeName>
</protein>
<sequence length="178" mass="19233">MSRIGKRPISIPSGVDAKIEGSKIVFTKGKQEKVLETYGRVGLEIANGELVLKLGGEDAQSKAYWGTYRALANNIVIGLSAGFTKQLEINGVGYKAAVKGSVLELALGFSHPVNYEIPEGVEIAVEKNVITIKGSDKQQIGQIAAEIREFRPPEPYKGKGVKYSDETIIRKAGKTSKK</sequence>
<evidence type="ECO:0000255" key="1">
    <source>
        <dbReference type="HAMAP-Rule" id="MF_01365"/>
    </source>
</evidence>
<evidence type="ECO:0000305" key="2"/>
<gene>
    <name evidence="1" type="primary">rplF</name>
    <name type="ordered locus">WS1702</name>
</gene>
<organism>
    <name type="scientific">Wolinella succinogenes (strain ATCC 29543 / DSM 1740 / CCUG 13145 / JCM 31913 / LMG 7466 / NCTC 11488 / FDC 602W)</name>
    <name type="common">Vibrio succinogenes</name>
    <dbReference type="NCBI Taxonomy" id="273121"/>
    <lineage>
        <taxon>Bacteria</taxon>
        <taxon>Pseudomonadati</taxon>
        <taxon>Campylobacterota</taxon>
        <taxon>Epsilonproteobacteria</taxon>
        <taxon>Campylobacterales</taxon>
        <taxon>Helicobacteraceae</taxon>
        <taxon>Wolinella</taxon>
    </lineage>
</organism>
<name>RL6_WOLSU</name>
<comment type="function">
    <text evidence="1">This protein binds to the 23S rRNA, and is important in its secondary structure. It is located near the subunit interface in the base of the L7/L12 stalk, and near the tRNA binding site of the peptidyltransferase center.</text>
</comment>
<comment type="subunit">
    <text evidence="1">Part of the 50S ribosomal subunit.</text>
</comment>
<comment type="similarity">
    <text evidence="1">Belongs to the universal ribosomal protein uL6 family.</text>
</comment>
<accession>Q7M8E7</accession>
<reference key="1">
    <citation type="journal article" date="2003" name="Proc. Natl. Acad. Sci. U.S.A.">
        <title>Complete genome sequence and analysis of Wolinella succinogenes.</title>
        <authorList>
            <person name="Baar C."/>
            <person name="Eppinger M."/>
            <person name="Raddatz G."/>
            <person name="Simon J."/>
            <person name="Lanz C."/>
            <person name="Klimmek O."/>
            <person name="Nandakumar R."/>
            <person name="Gross R."/>
            <person name="Rosinus A."/>
            <person name="Keller H."/>
            <person name="Jagtap P."/>
            <person name="Linke B."/>
            <person name="Meyer F."/>
            <person name="Lederer H."/>
            <person name="Schuster S.C."/>
        </authorList>
    </citation>
    <scope>NUCLEOTIDE SEQUENCE [LARGE SCALE GENOMIC DNA]</scope>
    <source>
        <strain>ATCC 29543 / DSM 1740 / CCUG 13145 / JCM 31913 / LMG 7466 / NCTC 11488 / FDC 602W</strain>
    </source>
</reference>
<dbReference type="EMBL" id="BX571661">
    <property type="protein sequence ID" value="CAE10729.1"/>
    <property type="molecule type" value="Genomic_DNA"/>
</dbReference>
<dbReference type="RefSeq" id="WP_011139513.1">
    <property type="nucleotide sequence ID" value="NC_005090.1"/>
</dbReference>
<dbReference type="SMR" id="Q7M8E7"/>
<dbReference type="STRING" id="273121.WS1702"/>
<dbReference type="KEGG" id="wsu:WS1702"/>
<dbReference type="eggNOG" id="COG0097">
    <property type="taxonomic scope" value="Bacteria"/>
</dbReference>
<dbReference type="HOGENOM" id="CLU_065464_1_2_7"/>
<dbReference type="Proteomes" id="UP000000422">
    <property type="component" value="Chromosome"/>
</dbReference>
<dbReference type="GO" id="GO:0022625">
    <property type="term" value="C:cytosolic large ribosomal subunit"/>
    <property type="evidence" value="ECO:0007669"/>
    <property type="project" value="TreeGrafter"/>
</dbReference>
<dbReference type="GO" id="GO:0019843">
    <property type="term" value="F:rRNA binding"/>
    <property type="evidence" value="ECO:0007669"/>
    <property type="project" value="UniProtKB-UniRule"/>
</dbReference>
<dbReference type="GO" id="GO:0003735">
    <property type="term" value="F:structural constituent of ribosome"/>
    <property type="evidence" value="ECO:0007669"/>
    <property type="project" value="InterPro"/>
</dbReference>
<dbReference type="GO" id="GO:0002181">
    <property type="term" value="P:cytoplasmic translation"/>
    <property type="evidence" value="ECO:0007669"/>
    <property type="project" value="TreeGrafter"/>
</dbReference>
<dbReference type="FunFam" id="3.90.930.12:FF:000001">
    <property type="entry name" value="50S ribosomal protein L6"/>
    <property type="match status" value="1"/>
</dbReference>
<dbReference type="Gene3D" id="3.90.930.12">
    <property type="entry name" value="Ribosomal protein L6, alpha-beta domain"/>
    <property type="match status" value="2"/>
</dbReference>
<dbReference type="HAMAP" id="MF_01365_B">
    <property type="entry name" value="Ribosomal_uL6_B"/>
    <property type="match status" value="1"/>
</dbReference>
<dbReference type="InterPro" id="IPR000702">
    <property type="entry name" value="Ribosomal_uL6-like"/>
</dbReference>
<dbReference type="InterPro" id="IPR036789">
    <property type="entry name" value="Ribosomal_uL6-like_a/b-dom_sf"/>
</dbReference>
<dbReference type="InterPro" id="IPR020040">
    <property type="entry name" value="Ribosomal_uL6_a/b-dom"/>
</dbReference>
<dbReference type="InterPro" id="IPR019906">
    <property type="entry name" value="Ribosomal_uL6_bac-type"/>
</dbReference>
<dbReference type="InterPro" id="IPR002358">
    <property type="entry name" value="Ribosomal_uL6_CS"/>
</dbReference>
<dbReference type="NCBIfam" id="TIGR03654">
    <property type="entry name" value="L6_bact"/>
    <property type="match status" value="1"/>
</dbReference>
<dbReference type="PANTHER" id="PTHR11655">
    <property type="entry name" value="60S/50S RIBOSOMAL PROTEIN L6/L9"/>
    <property type="match status" value="1"/>
</dbReference>
<dbReference type="PANTHER" id="PTHR11655:SF14">
    <property type="entry name" value="LARGE RIBOSOMAL SUBUNIT PROTEIN UL6M"/>
    <property type="match status" value="1"/>
</dbReference>
<dbReference type="Pfam" id="PF00347">
    <property type="entry name" value="Ribosomal_L6"/>
    <property type="match status" value="1"/>
</dbReference>
<dbReference type="PIRSF" id="PIRSF002162">
    <property type="entry name" value="Ribosomal_L6"/>
    <property type="match status" value="1"/>
</dbReference>
<dbReference type="PRINTS" id="PR00059">
    <property type="entry name" value="RIBOSOMALL6"/>
</dbReference>
<dbReference type="SUPFAM" id="SSF56053">
    <property type="entry name" value="Ribosomal protein L6"/>
    <property type="match status" value="2"/>
</dbReference>
<dbReference type="PROSITE" id="PS00525">
    <property type="entry name" value="RIBOSOMAL_L6_1"/>
    <property type="match status" value="1"/>
</dbReference>
<feature type="chain" id="PRO_0000265312" description="Large ribosomal subunit protein uL6">
    <location>
        <begin position="1"/>
        <end position="178"/>
    </location>
</feature>